<keyword id="KW-0002">3D-structure</keyword>
<keyword id="KW-0025">Alternative splicing</keyword>
<keyword id="KW-0175">Coiled coil</keyword>
<keyword id="KW-0223">Dioxygenase</keyword>
<keyword id="KW-0242">Dwarfism</keyword>
<keyword id="KW-0256">Endoplasmic reticulum</keyword>
<keyword id="KW-0272">Extracellular matrix</keyword>
<keyword id="KW-0325">Glycoprotein</keyword>
<keyword id="KW-0408">Iron</keyword>
<keyword id="KW-0479">Metal-binding</keyword>
<keyword id="KW-1065">Osteogenesis imperfecta</keyword>
<keyword id="KW-0560">Oxidoreductase</keyword>
<keyword id="KW-0654">Proteoglycan</keyword>
<keyword id="KW-1267">Proteomics identification</keyword>
<keyword id="KW-1185">Reference proteome</keyword>
<keyword id="KW-0677">Repeat</keyword>
<keyword id="KW-0964">Secreted</keyword>
<keyword id="KW-0732">Signal</keyword>
<keyword id="KW-0802">TPR repeat</keyword>
<keyword id="KW-0847">Vitamin C</keyword>
<name>P3H1_HUMAN</name>
<accession>Q32P28</accession>
<accession>Q7KZR4</accession>
<accession>Q96BR8</accession>
<accession>Q96SK8</accession>
<accession>Q96SL5</accession>
<accession>Q96SN3</accession>
<accession>Q9H6K3</accession>
<accession>Q9HC86</accession>
<accession>Q9HC87</accession>
<reference key="1">
    <citation type="journal article" date="2000" name="Oncogene">
        <title>Gros1, a potential growth suppressor on chromosome 1: its identity to basement membrane-associated proteoglycan, leprecan.</title>
        <authorList>
            <person name="Kaul S.C."/>
            <person name="Sugihara T."/>
            <person name="Yoshida A."/>
            <person name="Nomura H."/>
            <person name="Wadhwa R."/>
        </authorList>
    </citation>
    <scope>NUCLEOTIDE SEQUENCE [MRNA] (ISOFORMS 1 AND 2)</scope>
    <scope>FUNCTION</scope>
    <source>
        <tissue>Testis</tissue>
    </source>
</reference>
<reference key="2">
    <citation type="journal article" date="2004" name="Nat. Genet.">
        <title>Complete sequencing and characterization of 21,243 full-length human cDNAs.</title>
        <authorList>
            <person name="Ota T."/>
            <person name="Suzuki Y."/>
            <person name="Nishikawa T."/>
            <person name="Otsuki T."/>
            <person name="Sugiyama T."/>
            <person name="Irie R."/>
            <person name="Wakamatsu A."/>
            <person name="Hayashi K."/>
            <person name="Sato H."/>
            <person name="Nagai K."/>
            <person name="Kimura K."/>
            <person name="Makita H."/>
            <person name="Sekine M."/>
            <person name="Obayashi M."/>
            <person name="Nishi T."/>
            <person name="Shibahara T."/>
            <person name="Tanaka T."/>
            <person name="Ishii S."/>
            <person name="Yamamoto J."/>
            <person name="Saito K."/>
            <person name="Kawai Y."/>
            <person name="Isono Y."/>
            <person name="Nakamura Y."/>
            <person name="Nagahari K."/>
            <person name="Murakami K."/>
            <person name="Yasuda T."/>
            <person name="Iwayanagi T."/>
            <person name="Wagatsuma M."/>
            <person name="Shiratori A."/>
            <person name="Sudo H."/>
            <person name="Hosoiri T."/>
            <person name="Kaku Y."/>
            <person name="Kodaira H."/>
            <person name="Kondo H."/>
            <person name="Sugawara M."/>
            <person name="Takahashi M."/>
            <person name="Kanda K."/>
            <person name="Yokoi T."/>
            <person name="Furuya T."/>
            <person name="Kikkawa E."/>
            <person name="Omura Y."/>
            <person name="Abe K."/>
            <person name="Kamihara K."/>
            <person name="Katsuta N."/>
            <person name="Sato K."/>
            <person name="Tanikawa M."/>
            <person name="Yamazaki M."/>
            <person name="Ninomiya K."/>
            <person name="Ishibashi T."/>
            <person name="Yamashita H."/>
            <person name="Murakawa K."/>
            <person name="Fujimori K."/>
            <person name="Tanai H."/>
            <person name="Kimata M."/>
            <person name="Watanabe M."/>
            <person name="Hiraoka S."/>
            <person name="Chiba Y."/>
            <person name="Ishida S."/>
            <person name="Ono Y."/>
            <person name="Takiguchi S."/>
            <person name="Watanabe S."/>
            <person name="Yosida M."/>
            <person name="Hotuta T."/>
            <person name="Kusano J."/>
            <person name="Kanehori K."/>
            <person name="Takahashi-Fujii A."/>
            <person name="Hara H."/>
            <person name="Tanase T.-O."/>
            <person name="Nomura Y."/>
            <person name="Togiya S."/>
            <person name="Komai F."/>
            <person name="Hara R."/>
            <person name="Takeuchi K."/>
            <person name="Arita M."/>
            <person name="Imose N."/>
            <person name="Musashino K."/>
            <person name="Yuuki H."/>
            <person name="Oshima A."/>
            <person name="Sasaki N."/>
            <person name="Aotsuka S."/>
            <person name="Yoshikawa Y."/>
            <person name="Matsunawa H."/>
            <person name="Ichihara T."/>
            <person name="Shiohata N."/>
            <person name="Sano S."/>
            <person name="Moriya S."/>
            <person name="Momiyama H."/>
            <person name="Satoh N."/>
            <person name="Takami S."/>
            <person name="Terashima Y."/>
            <person name="Suzuki O."/>
            <person name="Nakagawa S."/>
            <person name="Senoh A."/>
            <person name="Mizoguchi H."/>
            <person name="Goto Y."/>
            <person name="Shimizu F."/>
            <person name="Wakebe H."/>
            <person name="Hishigaki H."/>
            <person name="Watanabe T."/>
            <person name="Sugiyama A."/>
            <person name="Takemoto M."/>
            <person name="Kawakami B."/>
            <person name="Yamazaki M."/>
            <person name="Watanabe K."/>
            <person name="Kumagai A."/>
            <person name="Itakura S."/>
            <person name="Fukuzumi Y."/>
            <person name="Fujimori Y."/>
            <person name="Komiyama M."/>
            <person name="Tashiro H."/>
            <person name="Tanigami A."/>
            <person name="Fujiwara T."/>
            <person name="Ono T."/>
            <person name="Yamada K."/>
            <person name="Fujii Y."/>
            <person name="Ozaki K."/>
            <person name="Hirao M."/>
            <person name="Ohmori Y."/>
            <person name="Kawabata A."/>
            <person name="Hikiji T."/>
            <person name="Kobatake N."/>
            <person name="Inagaki H."/>
            <person name="Ikema Y."/>
            <person name="Okamoto S."/>
            <person name="Okitani R."/>
            <person name="Kawakami T."/>
            <person name="Noguchi S."/>
            <person name="Itoh T."/>
            <person name="Shigeta K."/>
            <person name="Senba T."/>
            <person name="Matsumura K."/>
            <person name="Nakajima Y."/>
            <person name="Mizuno T."/>
            <person name="Morinaga M."/>
            <person name="Sasaki M."/>
            <person name="Togashi T."/>
            <person name="Oyama M."/>
            <person name="Hata H."/>
            <person name="Watanabe M."/>
            <person name="Komatsu T."/>
            <person name="Mizushima-Sugano J."/>
            <person name="Satoh T."/>
            <person name="Shirai Y."/>
            <person name="Takahashi Y."/>
            <person name="Nakagawa K."/>
            <person name="Okumura K."/>
            <person name="Nagase T."/>
            <person name="Nomura N."/>
            <person name="Kikuchi H."/>
            <person name="Masuho Y."/>
            <person name="Yamashita R."/>
            <person name="Nakai K."/>
            <person name="Yada T."/>
            <person name="Nakamura Y."/>
            <person name="Ohara O."/>
            <person name="Isogai T."/>
            <person name="Sugano S."/>
        </authorList>
    </citation>
    <scope>NUCLEOTIDE SEQUENCE [LARGE SCALE MRNA] (ISOFORMS 1 AND 3)</scope>
    <source>
        <tissue>Epithelium</tissue>
        <tissue>Teratocarcinoma</tissue>
    </source>
</reference>
<reference key="3">
    <citation type="journal article" date="2005" name="DNA Res.">
        <title>Signal sequence and keyword trap in silico for selection of full-length human cDNAs encoding secretion or membrane proteins from oligo-capped cDNA libraries.</title>
        <authorList>
            <person name="Otsuki T."/>
            <person name="Ota T."/>
            <person name="Nishikawa T."/>
            <person name="Hayashi K."/>
            <person name="Suzuki Y."/>
            <person name="Yamamoto J."/>
            <person name="Wakamatsu A."/>
            <person name="Kimura K."/>
            <person name="Sakamoto K."/>
            <person name="Hatano N."/>
            <person name="Kawai Y."/>
            <person name="Ishii S."/>
            <person name="Saito K."/>
            <person name="Kojima S."/>
            <person name="Sugiyama T."/>
            <person name="Ono T."/>
            <person name="Okano K."/>
            <person name="Yoshikawa Y."/>
            <person name="Aotsuka S."/>
            <person name="Sasaki N."/>
            <person name="Hattori A."/>
            <person name="Okumura K."/>
            <person name="Nagai K."/>
            <person name="Sugano S."/>
            <person name="Isogai T."/>
        </authorList>
    </citation>
    <scope>NUCLEOTIDE SEQUENCE [LARGE SCALE MRNA] (ISOFORM 1)</scope>
    <source>
        <tissue>Teratocarcinoma</tissue>
    </source>
</reference>
<reference key="4">
    <citation type="journal article" date="2004" name="Genome Res.">
        <title>The status, quality, and expansion of the NIH full-length cDNA project: the Mammalian Gene Collection (MGC).</title>
        <authorList>
            <consortium name="The MGC Project Team"/>
        </authorList>
    </citation>
    <scope>NUCLEOTIDE SEQUENCE [LARGE SCALE MRNA] (ISOFORM 4)</scope>
    <scope>NUCLEOTIDE SEQUENCE [LARGE SCALE MRNA] OF 336-736 (ISOFORM 1)</scope>
    <source>
        <tissue>Duodenum</tissue>
        <tissue>Testis</tissue>
    </source>
</reference>
<reference key="5">
    <citation type="submission" date="2003-05" db="EMBL/GenBank/DDBJ databases">
        <title>Cloning of human full-length CDSs in BD Creator(TM) system donor vector.</title>
        <authorList>
            <person name="Kalnine N."/>
            <person name="Chen X."/>
            <person name="Rolfs A."/>
            <person name="Halleck A."/>
            <person name="Hines L."/>
            <person name="Eisenstein S."/>
            <person name="Koundinya M."/>
            <person name="Raphael J."/>
            <person name="Moreira D."/>
            <person name="Kelley T."/>
            <person name="LaBaer J."/>
            <person name="Lin Y."/>
            <person name="Phelan M."/>
            <person name="Farmer A."/>
        </authorList>
    </citation>
    <scope>NUCLEOTIDE SEQUENCE [LARGE SCALE MRNA] OF 347-736 (ISOFORM 1)</scope>
</reference>
<reference key="6">
    <citation type="journal article" date="2007" name="Nat. Genet.">
        <title>Prolyl 3-hydroxylase 1 deficiency causes a recessive metabolic bone disorder resembling lethal/severe osteogenesis imperfecta.</title>
        <authorList>
            <person name="Cabral W.A."/>
            <person name="Chang W."/>
            <person name="Barnes A.M."/>
            <person name="Weis M."/>
            <person name="Scott M.A."/>
            <person name="Leikin S."/>
            <person name="Makareeva E."/>
            <person name="Kuznetsova N.V."/>
            <person name="Rosenbaum K.N."/>
            <person name="Tifft C.J."/>
            <person name="Bulas D.I."/>
            <person name="Kozma C."/>
            <person name="Smith P.A."/>
            <person name="Eyre D.R."/>
            <person name="Marini J.C."/>
        </authorList>
    </citation>
    <scope>INVOLVEMENT IN OI8</scope>
</reference>
<reference key="7">
    <citation type="journal article" date="2009" name="J. Med. Genet.">
        <title>Recessive osteogenesis imperfecta caused by LEPRE1 mutations: clinical documentation and identification of the splice form responsible for prolyl 3-hydroxylation.</title>
        <authorList>
            <person name="Willaert A."/>
            <person name="Malfait F."/>
            <person name="Symoens S."/>
            <person name="Gevaert K."/>
            <person name="Kayserili H."/>
            <person name="Megarbane A."/>
            <person name="Mortier G."/>
            <person name="Leroy J.G."/>
            <person name="Coucke P.J."/>
            <person name="De Paepe A."/>
        </authorList>
    </citation>
    <scope>INVOLVEMENT IN OI8</scope>
    <scope>SUBCELLULAR LOCATION</scope>
    <scope>ALTERNATIVE SPLICING (ISOFORMS 1; 3 AND 4)</scope>
</reference>
<reference key="8">
    <citation type="journal article" date="2009" name="J. Proteome Res.">
        <title>Glycoproteomics analysis of human liver tissue by combination of multiple enzyme digestion and hydrazide chemistry.</title>
        <authorList>
            <person name="Chen R."/>
            <person name="Jiang X."/>
            <person name="Sun D."/>
            <person name="Han G."/>
            <person name="Wang F."/>
            <person name="Ye M."/>
            <person name="Wang L."/>
            <person name="Zou H."/>
        </authorList>
    </citation>
    <scope>GLYCOSYLATION [LARGE SCALE ANALYSIS] AT ASN-540</scope>
    <source>
        <tissue>Liver</tissue>
    </source>
</reference>
<reference key="9">
    <citation type="journal article" date="2011" name="BMC Syst. Biol.">
        <title>Initial characterization of the human central proteome.</title>
        <authorList>
            <person name="Burkard T.R."/>
            <person name="Planyavsky M."/>
            <person name="Kaupe I."/>
            <person name="Breitwieser F.P."/>
            <person name="Buerckstuemmer T."/>
            <person name="Bennett K.L."/>
            <person name="Superti-Furga G."/>
            <person name="Colinge J."/>
        </authorList>
    </citation>
    <scope>IDENTIFICATION BY MASS SPECTROMETRY [LARGE SCALE ANALYSIS]</scope>
</reference>
<reference key="10">
    <citation type="journal article" date="2015" name="Proteomics">
        <title>N-terminome analysis of the human mitochondrial proteome.</title>
        <authorList>
            <person name="Vaca Jacome A.S."/>
            <person name="Rabilloud T."/>
            <person name="Schaeffer-Reiss C."/>
            <person name="Rompais M."/>
            <person name="Ayoub D."/>
            <person name="Lane L."/>
            <person name="Bairoch A."/>
            <person name="Van Dorsselaer A."/>
            <person name="Carapito C."/>
        </authorList>
    </citation>
    <scope>IDENTIFICATION BY MASS SPECTROMETRY [LARGE SCALE ANALYSIS]</scope>
</reference>
<feature type="signal peptide" evidence="3">
    <location>
        <begin position="1"/>
        <end position="22"/>
    </location>
</feature>
<feature type="chain" id="PRO_0000240352" description="Prolyl 3-hydroxylase 1">
    <location>
        <begin position="23"/>
        <end position="736"/>
    </location>
</feature>
<feature type="repeat" description="TPR 1">
    <location>
        <begin position="35"/>
        <end position="68"/>
    </location>
</feature>
<feature type="repeat" description="TPR 2">
    <location>
        <begin position="143"/>
        <end position="176"/>
    </location>
</feature>
<feature type="repeat" description="TPR 3">
    <location>
        <begin position="205"/>
        <end position="238"/>
    </location>
</feature>
<feature type="repeat" description="TPR 4">
    <location>
        <begin position="301"/>
        <end position="334"/>
    </location>
</feature>
<feature type="domain" description="Fe2OG dioxygenase" evidence="4">
    <location>
        <begin position="564"/>
        <end position="678"/>
    </location>
</feature>
<feature type="region of interest" description="Disordered" evidence="6">
    <location>
        <begin position="699"/>
        <end position="736"/>
    </location>
</feature>
<feature type="coiled-coil region" evidence="3">
    <location>
        <begin position="401"/>
        <end position="439"/>
    </location>
</feature>
<feature type="short sequence motif" description="Prevents secretion from ER" evidence="5">
    <location>
        <begin position="733"/>
        <end position="736"/>
    </location>
</feature>
<feature type="active site" evidence="1">
    <location>
        <position position="669"/>
    </location>
</feature>
<feature type="binding site">
    <location>
        <position position="587"/>
    </location>
    <ligand>
        <name>Fe cation</name>
        <dbReference type="ChEBI" id="CHEBI:24875"/>
    </ligand>
</feature>
<feature type="binding site">
    <location>
        <position position="589"/>
    </location>
    <ligand>
        <name>Fe cation</name>
        <dbReference type="ChEBI" id="CHEBI:24875"/>
    </ligand>
</feature>
<feature type="binding site">
    <location>
        <position position="659"/>
    </location>
    <ligand>
        <name>Fe cation</name>
        <dbReference type="ChEBI" id="CHEBI:24875"/>
    </ligand>
</feature>
<feature type="glycosylation site" description="N-linked (GlcNAc...) asparagine" evidence="3">
    <location>
        <position position="316"/>
    </location>
</feature>
<feature type="glycosylation site" description="N-linked (GlcNAc...) asparagine" evidence="3">
    <location>
        <position position="467"/>
    </location>
</feature>
<feature type="glycosylation site" description="N-linked (GlcNAc...) asparagine" evidence="10">
    <location>
        <position position="540"/>
    </location>
</feature>
<feature type="splice variant" id="VSP_019346" description="In isoform 2." evidence="11">
    <original>SAK</original>
    <variation>QGT</variation>
    <location>
        <begin position="361"/>
        <end position="363"/>
    </location>
</feature>
<feature type="splice variant" id="VSP_019347" description="In isoform 2." evidence="11">
    <location>
        <begin position="364"/>
        <end position="736"/>
    </location>
</feature>
<feature type="splice variant" id="VSP_019348" description="In isoform 3." evidence="12">
    <original>DRVQADDLVKMLFSPEEMDLSQEQPLDAQQGPPEPAQESLSGSESKPKDEL</original>
    <variation>VRAARAGESSWCCGDPFPERPWFAFLFPKSHCQWLRHERSTWDTSSNALSLWSHCLVLPGPAVNGIQVGKEVKTGSDAEFLVPSLGPTSAVLFQRVGPAGKEMSLGPLRNLPCPLGSSS</variation>
    <location>
        <begin position="686"/>
        <end position="736"/>
    </location>
</feature>
<feature type="splice variant" id="VSP_054864" description="In isoform 4." evidence="13">
    <original>DRVQADDLVKMLFSPEEMDLSQEQPLDAQQGPPEPAQESLSGSESKPKDEL</original>
    <variation>VRAARAGQGAGR</variation>
    <location>
        <begin position="686"/>
        <end position="736"/>
    </location>
</feature>
<feature type="sequence variant" id="VAR_033252" description="In dbSNP:rs6700677.">
    <original>G</original>
    <variation>R</variation>
    <location>
        <position position="349"/>
    </location>
</feature>
<feature type="sequence variant" id="VAR_033253" description="In dbSNP:rs3738501.">
    <original>P</original>
    <variation>R</variation>
    <location>
        <position position="506"/>
    </location>
</feature>
<feature type="sequence variant" id="VAR_033254" description="In dbSNP:rs11581921.">
    <original>M</original>
    <variation>I</variation>
    <location>
        <position position="549"/>
    </location>
</feature>
<feature type="sequence variant" id="VAR_050442" description="In dbSNP:rs3738497.">
    <original>Q</original>
    <variation>K</variation>
    <location>
        <position position="644"/>
    </location>
</feature>
<feature type="sequence conflict" description="In Ref. 1; AAG31018/AAG31019." evidence="14" ref="1">
    <original>A</original>
    <variation>G</variation>
    <location>
        <position position="102"/>
    </location>
</feature>
<feature type="sequence conflict" description="In Ref. 1; AAG31018/AAG31019." evidence="14" ref="1">
    <original>V</original>
    <variation>G</variation>
    <location>
        <position position="321"/>
    </location>
</feature>
<feature type="sequence conflict" description="In Ref. 2; BAB55264." evidence="14" ref="2">
    <original>E</original>
    <variation>G</variation>
    <location>
        <position position="396"/>
    </location>
</feature>
<feature type="sequence conflict" description="In Ref. 1; AAG31019." evidence="14" ref="1">
    <original>S</original>
    <variation>Y</variation>
    <location>
        <position position="469"/>
    </location>
</feature>
<feature type="sequence conflict" description="In Ref. 2; BAB15256." evidence="14" ref="2">
    <original>P</original>
    <variation>L</variation>
    <location>
        <position position="605"/>
    </location>
</feature>
<feature type="sequence conflict" description="In Ref. 2; BAB55291." evidence="14" ref="2">
    <original>L</original>
    <variation>M</variation>
    <location>
        <position position="711"/>
    </location>
</feature>
<feature type="helix" evidence="17">
    <location>
        <begin position="35"/>
        <end position="48"/>
    </location>
</feature>
<feature type="helix" evidence="17">
    <location>
        <begin position="51"/>
        <end position="82"/>
    </location>
</feature>
<feature type="helix" evidence="17">
    <location>
        <begin position="100"/>
        <end position="124"/>
    </location>
</feature>
<feature type="helix" evidence="17">
    <location>
        <begin position="128"/>
        <end position="130"/>
    </location>
</feature>
<feature type="helix" evidence="17">
    <location>
        <begin position="134"/>
        <end position="141"/>
    </location>
</feature>
<feature type="helix" evidence="17">
    <location>
        <begin position="144"/>
        <end position="156"/>
    </location>
</feature>
<feature type="helix" evidence="17">
    <location>
        <begin position="159"/>
        <end position="172"/>
    </location>
</feature>
<feature type="helix" evidence="17">
    <location>
        <begin position="177"/>
        <end position="188"/>
    </location>
</feature>
<feature type="strand" evidence="17">
    <location>
        <begin position="189"/>
        <end position="191"/>
    </location>
</feature>
<feature type="helix" evidence="16">
    <location>
        <begin position="194"/>
        <end position="196"/>
    </location>
</feature>
<feature type="strand" evidence="17">
    <location>
        <begin position="200"/>
        <end position="202"/>
    </location>
</feature>
<feature type="helix" evidence="17">
    <location>
        <begin position="204"/>
        <end position="217"/>
    </location>
</feature>
<feature type="turn" evidence="17">
    <location>
        <begin position="222"/>
        <end position="224"/>
    </location>
</feature>
<feature type="helix" evidence="17">
    <location>
        <begin position="225"/>
        <end position="243"/>
    </location>
</feature>
<feature type="turn" evidence="17">
    <location>
        <begin position="254"/>
        <end position="259"/>
    </location>
</feature>
<feature type="helix" evidence="17">
    <location>
        <begin position="264"/>
        <end position="280"/>
    </location>
</feature>
<feature type="turn" evidence="17">
    <location>
        <begin position="281"/>
        <end position="287"/>
    </location>
</feature>
<feature type="strand" evidence="18">
    <location>
        <begin position="292"/>
        <end position="294"/>
    </location>
</feature>
<feature type="helix" evidence="17">
    <location>
        <begin position="299"/>
        <end position="314"/>
    </location>
</feature>
<feature type="helix" evidence="17">
    <location>
        <begin position="318"/>
        <end position="328"/>
    </location>
</feature>
<feature type="helix" evidence="17">
    <location>
        <begin position="336"/>
        <end position="347"/>
    </location>
</feature>
<feature type="helix" evidence="17">
    <location>
        <begin position="350"/>
        <end position="355"/>
    </location>
</feature>
<feature type="helix" evidence="17">
    <location>
        <begin position="360"/>
        <end position="383"/>
    </location>
</feature>
<feature type="helix" evidence="18">
    <location>
        <begin position="396"/>
        <end position="398"/>
    </location>
</feature>
<feature type="helix" evidence="17">
    <location>
        <begin position="401"/>
        <end position="427"/>
    </location>
</feature>
<feature type="turn" evidence="17">
    <location>
        <begin position="443"/>
        <end position="445"/>
    </location>
</feature>
<feature type="strand" evidence="18">
    <location>
        <begin position="454"/>
        <end position="456"/>
    </location>
</feature>
<feature type="strand" evidence="17">
    <location>
        <begin position="458"/>
        <end position="461"/>
    </location>
</feature>
<feature type="turn" evidence="17">
    <location>
        <begin position="463"/>
        <end position="467"/>
    </location>
</feature>
<feature type="strand" evidence="17">
    <location>
        <begin position="468"/>
        <end position="475"/>
    </location>
</feature>
<feature type="helix" evidence="17">
    <location>
        <begin position="480"/>
        <end position="492"/>
    </location>
</feature>
<feature type="strand" evidence="17">
    <location>
        <begin position="512"/>
        <end position="516"/>
    </location>
</feature>
<feature type="helix" evidence="17">
    <location>
        <begin position="518"/>
        <end position="527"/>
    </location>
</feature>
<feature type="helix" evidence="17">
    <location>
        <begin position="532"/>
        <end position="552"/>
    </location>
</feature>
<feature type="strand" evidence="17">
    <location>
        <begin position="560"/>
        <end position="570"/>
    </location>
</feature>
<feature type="strand" evidence="17">
    <location>
        <begin position="583"/>
        <end position="587"/>
    </location>
</feature>
<feature type="strand" evidence="17">
    <location>
        <begin position="589"/>
        <end position="594"/>
    </location>
</feature>
<feature type="turn" evidence="17">
    <location>
        <begin position="595"/>
        <end position="598"/>
    </location>
</feature>
<feature type="strand" evidence="17">
    <location>
        <begin position="599"/>
        <end position="601"/>
    </location>
</feature>
<feature type="strand" evidence="17">
    <location>
        <begin position="612"/>
        <end position="617"/>
    </location>
</feature>
<feature type="strand" evidence="17">
    <location>
        <begin position="622"/>
        <end position="624"/>
    </location>
</feature>
<feature type="strand" evidence="17">
    <location>
        <begin position="627"/>
        <end position="630"/>
    </location>
</feature>
<feature type="strand" evidence="17">
    <location>
        <begin position="637"/>
        <end position="641"/>
    </location>
</feature>
<feature type="strand" evidence="17">
    <location>
        <begin position="648"/>
        <end position="652"/>
    </location>
</feature>
<feature type="strand" evidence="17">
    <location>
        <begin position="659"/>
        <end position="661"/>
    </location>
</feature>
<feature type="strand" evidence="17">
    <location>
        <begin position="664"/>
        <end position="678"/>
    </location>
</feature>
<feature type="strand" evidence="16">
    <location>
        <begin position="680"/>
        <end position="682"/>
    </location>
</feature>
<feature type="helix" evidence="17">
    <location>
        <begin position="686"/>
        <end position="698"/>
    </location>
</feature>
<gene>
    <name evidence="15" type="primary">P3H1</name>
    <name evidence="11" type="synonym">GROS1</name>
    <name evidence="2" type="synonym">LEPRE1</name>
    <name type="ORF">PSEC0109</name>
</gene>
<proteinExistence type="evidence at protein level"/>
<dbReference type="EC" id="1.14.11.7"/>
<dbReference type="EMBL" id="AF097431">
    <property type="protein sequence ID" value="AAG31018.1"/>
    <property type="molecule type" value="mRNA"/>
</dbReference>
<dbReference type="EMBL" id="AF097432">
    <property type="protein sequence ID" value="AAG31019.1"/>
    <property type="molecule type" value="mRNA"/>
</dbReference>
<dbReference type="EMBL" id="AK025841">
    <property type="protein sequence ID" value="BAB15256.1"/>
    <property type="status" value="ALT_INIT"/>
    <property type="molecule type" value="mRNA"/>
</dbReference>
<dbReference type="EMBL" id="AK027648">
    <property type="protein sequence ID" value="BAB55264.1"/>
    <property type="molecule type" value="mRNA"/>
</dbReference>
<dbReference type="EMBL" id="AK027680">
    <property type="protein sequence ID" value="BAB55291.1"/>
    <property type="molecule type" value="mRNA"/>
</dbReference>
<dbReference type="EMBL" id="AK027697">
    <property type="protein sequence ID" value="BAB55305.1"/>
    <property type="molecule type" value="mRNA"/>
</dbReference>
<dbReference type="EMBL" id="AK075418">
    <property type="protein sequence ID" value="BAC11608.1"/>
    <property type="molecule type" value="mRNA"/>
</dbReference>
<dbReference type="EMBL" id="BC015309">
    <property type="protein sequence ID" value="AAH15309.3"/>
    <property type="molecule type" value="mRNA"/>
</dbReference>
<dbReference type="EMBL" id="BC108311">
    <property type="protein sequence ID" value="AAI08312.1"/>
    <property type="molecule type" value="mRNA"/>
</dbReference>
<dbReference type="EMBL" id="BT007039">
    <property type="protein sequence ID" value="AAP35688.1"/>
    <property type="molecule type" value="mRNA"/>
</dbReference>
<dbReference type="CCDS" id="CCDS472.2">
    <molecule id="Q32P28-1"/>
</dbReference>
<dbReference type="CCDS" id="CCDS53307.1">
    <molecule id="Q32P28-4"/>
</dbReference>
<dbReference type="CCDS" id="CCDS57986.1">
    <molecule id="Q32P28-3"/>
</dbReference>
<dbReference type="RefSeq" id="NP_001139761.1">
    <molecule id="Q32P28-4"/>
    <property type="nucleotide sequence ID" value="NM_001146289.2"/>
</dbReference>
<dbReference type="RefSeq" id="NP_001230175.1">
    <molecule id="Q32P28-3"/>
    <property type="nucleotide sequence ID" value="NM_001243246.2"/>
</dbReference>
<dbReference type="RefSeq" id="NP_071751.3">
    <molecule id="Q32P28-1"/>
    <property type="nucleotide sequence ID" value="NM_022356.3"/>
</dbReference>
<dbReference type="PDB" id="8K0E">
    <property type="method" value="EM"/>
    <property type="resolution" value="3.65 A"/>
    <property type="chains" value="A=1-736"/>
</dbReference>
<dbReference type="PDB" id="8K0F">
    <property type="method" value="EM"/>
    <property type="resolution" value="3.37 A"/>
    <property type="chains" value="A=1-736"/>
</dbReference>
<dbReference type="PDB" id="8K0I">
    <property type="method" value="EM"/>
    <property type="resolution" value="3.62 A"/>
    <property type="chains" value="A/a=1-736"/>
</dbReference>
<dbReference type="PDB" id="8K0M">
    <property type="method" value="EM"/>
    <property type="resolution" value="3.17 A"/>
    <property type="chains" value="A=1-736"/>
</dbReference>
<dbReference type="PDB" id="8K17">
    <property type="method" value="EM"/>
    <property type="resolution" value="3.18 A"/>
    <property type="chains" value="A=1-736"/>
</dbReference>
<dbReference type="PDB" id="8KC9">
    <property type="method" value="EM"/>
    <property type="resolution" value="3.75 A"/>
    <property type="chains" value="A=1-736"/>
</dbReference>
<dbReference type="PDBsum" id="8K0E"/>
<dbReference type="PDBsum" id="8K0F"/>
<dbReference type="PDBsum" id="8K0I"/>
<dbReference type="PDBsum" id="8K0M"/>
<dbReference type="PDBsum" id="8K17"/>
<dbReference type="PDBsum" id="8KC9"/>
<dbReference type="EMDB" id="EMD-36762"/>
<dbReference type="EMDB" id="EMD-36763"/>
<dbReference type="EMDB" id="EMD-36765"/>
<dbReference type="EMDB" id="EMD-36774"/>
<dbReference type="EMDB" id="EMD-36787"/>
<dbReference type="EMDB" id="EMD-37097"/>
<dbReference type="SMR" id="Q32P28"/>
<dbReference type="BioGRID" id="122098">
    <property type="interactions" value="199"/>
</dbReference>
<dbReference type="FunCoup" id="Q32P28">
    <property type="interactions" value="968"/>
</dbReference>
<dbReference type="IntAct" id="Q32P28">
    <property type="interactions" value="101"/>
</dbReference>
<dbReference type="MINT" id="Q32P28"/>
<dbReference type="STRING" id="9606.ENSP00000236040"/>
<dbReference type="DrugBank" id="DB00126">
    <property type="generic name" value="Ascorbic acid"/>
</dbReference>
<dbReference type="DrugBank" id="DB00172">
    <property type="generic name" value="Proline"/>
</dbReference>
<dbReference type="DrugBank" id="DB00139">
    <property type="generic name" value="Succinic acid"/>
</dbReference>
<dbReference type="GlyConnect" id="1639">
    <property type="glycosylation" value="10 N-Linked glycans (2 sites)"/>
</dbReference>
<dbReference type="GlyCosmos" id="Q32P28">
    <property type="glycosylation" value="4 sites, 11 glycans"/>
</dbReference>
<dbReference type="GlyGen" id="Q32P28">
    <property type="glycosylation" value="7 sites, 21 N-linked glycans (3 sites), 2 O-linked glycans (2 sites)"/>
</dbReference>
<dbReference type="iPTMnet" id="Q32P28"/>
<dbReference type="MetOSite" id="Q32P28"/>
<dbReference type="PhosphoSitePlus" id="Q32P28"/>
<dbReference type="SwissPalm" id="Q32P28"/>
<dbReference type="BioMuta" id="P3H1"/>
<dbReference type="DMDM" id="109892809"/>
<dbReference type="jPOST" id="Q32P28"/>
<dbReference type="MassIVE" id="Q32P28"/>
<dbReference type="PaxDb" id="9606-ENSP00000236040"/>
<dbReference type="PeptideAtlas" id="Q32P28"/>
<dbReference type="ProteomicsDB" id="61620">
    <molecule id="Q32P28-1"/>
</dbReference>
<dbReference type="ProteomicsDB" id="61621">
    <molecule id="Q32P28-2"/>
</dbReference>
<dbReference type="ProteomicsDB" id="61622">
    <molecule id="Q32P28-3"/>
</dbReference>
<dbReference type="Pumba" id="Q32P28"/>
<dbReference type="Antibodypedia" id="32239">
    <property type="antibodies" value="311 antibodies from 23 providers"/>
</dbReference>
<dbReference type="DNASU" id="64175"/>
<dbReference type="Ensembl" id="ENST00000236040.8">
    <molecule id="Q32P28-3"/>
    <property type="protein sequence ID" value="ENSP00000236040.4"/>
    <property type="gene ID" value="ENSG00000117385.16"/>
</dbReference>
<dbReference type="Ensembl" id="ENST00000296388.10">
    <molecule id="Q32P28-1"/>
    <property type="protein sequence ID" value="ENSP00000296388.5"/>
    <property type="gene ID" value="ENSG00000117385.16"/>
</dbReference>
<dbReference type="Ensembl" id="ENST00000397054.7">
    <molecule id="Q32P28-4"/>
    <property type="protein sequence ID" value="ENSP00000380245.3"/>
    <property type="gene ID" value="ENSG00000117385.16"/>
</dbReference>
<dbReference type="GeneID" id="64175"/>
<dbReference type="KEGG" id="hsa:64175"/>
<dbReference type="MANE-Select" id="ENST00000296388.10">
    <property type="protein sequence ID" value="ENSP00000296388.5"/>
    <property type="RefSeq nucleotide sequence ID" value="NM_022356.4"/>
    <property type="RefSeq protein sequence ID" value="NP_071751.3"/>
</dbReference>
<dbReference type="UCSC" id="uc001chv.3">
    <molecule id="Q32P28-1"/>
    <property type="organism name" value="human"/>
</dbReference>
<dbReference type="AGR" id="HGNC:19316"/>
<dbReference type="CTD" id="64175"/>
<dbReference type="DisGeNET" id="64175"/>
<dbReference type="GeneCards" id="P3H1"/>
<dbReference type="HGNC" id="HGNC:19316">
    <property type="gene designation" value="P3H1"/>
</dbReference>
<dbReference type="HPA" id="ENSG00000117385">
    <property type="expression patterns" value="Low tissue specificity"/>
</dbReference>
<dbReference type="MalaCards" id="P3H1"/>
<dbReference type="MIM" id="610339">
    <property type="type" value="gene"/>
</dbReference>
<dbReference type="MIM" id="610915">
    <property type="type" value="phenotype"/>
</dbReference>
<dbReference type="neXtProt" id="NX_Q32P28"/>
<dbReference type="OpenTargets" id="ENSG00000117385"/>
<dbReference type="Orphanet" id="216804">
    <property type="disease" value="Osteogenesis imperfecta type 2"/>
</dbReference>
<dbReference type="Orphanet" id="216812">
    <property type="disease" value="Osteogenesis imperfecta type 3"/>
</dbReference>
<dbReference type="PharmGKB" id="PA134930599"/>
<dbReference type="VEuPathDB" id="HostDB:ENSG00000117385"/>
<dbReference type="eggNOG" id="KOG4459">
    <property type="taxonomic scope" value="Eukaryota"/>
</dbReference>
<dbReference type="GeneTree" id="ENSGT00940000158725"/>
<dbReference type="HOGENOM" id="CLU_017820_0_0_1"/>
<dbReference type="InParanoid" id="Q32P28"/>
<dbReference type="OMA" id="HTPSEMF"/>
<dbReference type="OrthoDB" id="8517835at2759"/>
<dbReference type="PAN-GO" id="Q32P28">
    <property type="GO annotations" value="3 GO annotations based on evolutionary models"/>
</dbReference>
<dbReference type="PhylomeDB" id="Q32P28"/>
<dbReference type="TreeFam" id="TF320837"/>
<dbReference type="BioCyc" id="MetaCyc:HS04122-MONOMER"/>
<dbReference type="BRENDA" id="1.14.11.28">
    <property type="organism ID" value="2681"/>
</dbReference>
<dbReference type="BRENDA" id="1.14.11.7">
    <property type="organism ID" value="2681"/>
</dbReference>
<dbReference type="PathwayCommons" id="Q32P28"/>
<dbReference type="Reactome" id="R-HSA-1650814">
    <property type="pathway name" value="Collagen biosynthesis and modifying enzymes"/>
</dbReference>
<dbReference type="SignaLink" id="Q32P28"/>
<dbReference type="BioGRID-ORCS" id="64175">
    <property type="hits" value="21 hits in 1162 CRISPR screens"/>
</dbReference>
<dbReference type="ChiTaRS" id="P3H1">
    <property type="organism name" value="human"/>
</dbReference>
<dbReference type="GenomeRNAi" id="64175"/>
<dbReference type="Pharos" id="Q32P28">
    <property type="development level" value="Tbio"/>
</dbReference>
<dbReference type="PRO" id="PR:Q32P28"/>
<dbReference type="Proteomes" id="UP000005640">
    <property type="component" value="Chromosome 1"/>
</dbReference>
<dbReference type="RNAct" id="Q32P28">
    <property type="molecule type" value="protein"/>
</dbReference>
<dbReference type="Bgee" id="ENSG00000117385">
    <property type="expression patterns" value="Expressed in stromal cell of endometrium and 157 other cell types or tissues"/>
</dbReference>
<dbReference type="ExpressionAtlas" id="Q32P28">
    <property type="expression patterns" value="baseline and differential"/>
</dbReference>
<dbReference type="GO" id="GO:0005737">
    <property type="term" value="C:cytoplasm"/>
    <property type="evidence" value="ECO:0000314"/>
    <property type="project" value="MGI"/>
</dbReference>
<dbReference type="GO" id="GO:0005783">
    <property type="term" value="C:endoplasmic reticulum"/>
    <property type="evidence" value="ECO:0000314"/>
    <property type="project" value="UniProtKB"/>
</dbReference>
<dbReference type="GO" id="GO:0005788">
    <property type="term" value="C:endoplasmic reticulum lumen"/>
    <property type="evidence" value="ECO:0000304"/>
    <property type="project" value="Reactome"/>
</dbReference>
<dbReference type="GO" id="GO:0070062">
    <property type="term" value="C:extracellular exosome"/>
    <property type="evidence" value="ECO:0007005"/>
    <property type="project" value="UniProtKB"/>
</dbReference>
<dbReference type="GO" id="GO:0016020">
    <property type="term" value="C:membrane"/>
    <property type="evidence" value="ECO:0007005"/>
    <property type="project" value="UniProtKB"/>
</dbReference>
<dbReference type="GO" id="GO:0005634">
    <property type="term" value="C:nucleus"/>
    <property type="evidence" value="ECO:0000314"/>
    <property type="project" value="MGI"/>
</dbReference>
<dbReference type="GO" id="GO:0032991">
    <property type="term" value="C:protein-containing complex"/>
    <property type="evidence" value="ECO:0000250"/>
    <property type="project" value="UniProtKB"/>
</dbReference>
<dbReference type="GO" id="GO:0005506">
    <property type="term" value="F:iron ion binding"/>
    <property type="evidence" value="ECO:0007669"/>
    <property type="project" value="InterPro"/>
</dbReference>
<dbReference type="GO" id="GO:0031418">
    <property type="term" value="F:L-ascorbic acid binding"/>
    <property type="evidence" value="ECO:0007669"/>
    <property type="project" value="UniProtKB-KW"/>
</dbReference>
<dbReference type="GO" id="GO:0019797">
    <property type="term" value="F:procollagen-proline 3-dioxygenase activity"/>
    <property type="evidence" value="ECO:0000250"/>
    <property type="project" value="UniProtKB"/>
</dbReference>
<dbReference type="GO" id="GO:0060348">
    <property type="term" value="P:bone development"/>
    <property type="evidence" value="ECO:0000315"/>
    <property type="project" value="UniProtKB"/>
</dbReference>
<dbReference type="GO" id="GO:0061077">
    <property type="term" value="P:chaperone-mediated protein folding"/>
    <property type="evidence" value="ECO:0000250"/>
    <property type="project" value="UniProtKB"/>
</dbReference>
<dbReference type="GO" id="GO:0030199">
    <property type="term" value="P:collagen fibril organization"/>
    <property type="evidence" value="ECO:0007669"/>
    <property type="project" value="Ensembl"/>
</dbReference>
<dbReference type="GO" id="GO:0032963">
    <property type="term" value="P:collagen metabolic process"/>
    <property type="evidence" value="ECO:0000250"/>
    <property type="project" value="UniProtKB"/>
</dbReference>
<dbReference type="GO" id="GO:0030308">
    <property type="term" value="P:negative regulation of cell growth"/>
    <property type="evidence" value="ECO:0007669"/>
    <property type="project" value="Ensembl"/>
</dbReference>
<dbReference type="GO" id="GO:0008285">
    <property type="term" value="P:negative regulation of cell population proliferation"/>
    <property type="evidence" value="ECO:0000303"/>
    <property type="project" value="UniProtKB"/>
</dbReference>
<dbReference type="GO" id="GO:1901874">
    <property type="term" value="P:negative regulation of post-translational protein modification"/>
    <property type="evidence" value="ECO:0000315"/>
    <property type="project" value="UniProtKB"/>
</dbReference>
<dbReference type="GO" id="GO:0010976">
    <property type="term" value="P:positive regulation of neuron projection development"/>
    <property type="evidence" value="ECO:0000250"/>
    <property type="project" value="ARUK-UCL"/>
</dbReference>
<dbReference type="GO" id="GO:0006457">
    <property type="term" value="P:protein folding"/>
    <property type="evidence" value="ECO:0000315"/>
    <property type="project" value="UniProtKB"/>
</dbReference>
<dbReference type="GO" id="GO:0018126">
    <property type="term" value="P:protein hydroxylation"/>
    <property type="evidence" value="ECO:0000315"/>
    <property type="project" value="UniProtKB"/>
</dbReference>
<dbReference type="GO" id="GO:0050821">
    <property type="term" value="P:protein stabilization"/>
    <property type="evidence" value="ECO:0000315"/>
    <property type="project" value="UniProtKB"/>
</dbReference>
<dbReference type="GO" id="GO:0030278">
    <property type="term" value="P:regulation of ossification"/>
    <property type="evidence" value="ECO:0007669"/>
    <property type="project" value="Ensembl"/>
</dbReference>
<dbReference type="GO" id="GO:0050708">
    <property type="term" value="P:regulation of protein secretion"/>
    <property type="evidence" value="ECO:0000315"/>
    <property type="project" value="UniProtKB"/>
</dbReference>
<dbReference type="FunFam" id="2.60.120.620:FF:000003">
    <property type="entry name" value="Prolyl 3-hydroxylase 2"/>
    <property type="match status" value="1"/>
</dbReference>
<dbReference type="Gene3D" id="2.60.120.620">
    <property type="entry name" value="q2cbj1_9rhob like domain"/>
    <property type="match status" value="1"/>
</dbReference>
<dbReference type="Gene3D" id="1.25.40.10">
    <property type="entry name" value="Tetratricopeptide repeat domain"/>
    <property type="match status" value="2"/>
</dbReference>
<dbReference type="InterPro" id="IPR056585">
    <property type="entry name" value="Leprecan_dom"/>
</dbReference>
<dbReference type="InterPro" id="IPR005123">
    <property type="entry name" value="Oxoglu/Fe-dep_dioxygenase_dom"/>
</dbReference>
<dbReference type="InterPro" id="IPR039575">
    <property type="entry name" value="P3H"/>
</dbReference>
<dbReference type="InterPro" id="IPR006620">
    <property type="entry name" value="Pro_4_hyd_alph"/>
</dbReference>
<dbReference type="InterPro" id="IPR044862">
    <property type="entry name" value="Pro_4_hyd_alph_FE2OG_OXY"/>
</dbReference>
<dbReference type="InterPro" id="IPR011990">
    <property type="entry name" value="TPR-like_helical_dom_sf"/>
</dbReference>
<dbReference type="PANTHER" id="PTHR14049">
    <property type="entry name" value="LEPRECAN 1"/>
    <property type="match status" value="1"/>
</dbReference>
<dbReference type="PANTHER" id="PTHR14049:SF5">
    <property type="entry name" value="PROLYL 3-HYDROXYLASE 1"/>
    <property type="match status" value="1"/>
</dbReference>
<dbReference type="Pfam" id="PF13640">
    <property type="entry name" value="2OG-FeII_Oxy_3"/>
    <property type="match status" value="1"/>
</dbReference>
<dbReference type="Pfam" id="PF23557">
    <property type="entry name" value="TPR_leprecan"/>
    <property type="match status" value="1"/>
</dbReference>
<dbReference type="SMART" id="SM00702">
    <property type="entry name" value="P4Hc"/>
    <property type="match status" value="1"/>
</dbReference>
<dbReference type="SUPFAM" id="SSF48452">
    <property type="entry name" value="TPR-like"/>
    <property type="match status" value="1"/>
</dbReference>
<dbReference type="PROSITE" id="PS00014">
    <property type="entry name" value="ER_TARGET"/>
    <property type="match status" value="1"/>
</dbReference>
<dbReference type="PROSITE" id="PS51471">
    <property type="entry name" value="FE2OG_OXY"/>
    <property type="match status" value="1"/>
</dbReference>
<comment type="function">
    <text evidence="7">Basement membrane-associated chondroitin sulfate proteoglycan (CSPG). Has prolyl 3-hydroxylase activity catalyzing the post-translational formation of 3-hydroxyproline in -Xaa-Pro-Gly- sequences in collagens, especially types IV and V. May be involved in the secretory pathway of cells. Has growth suppressive activity in fibroblasts.</text>
</comment>
<comment type="catalytic activity">
    <reaction>
        <text>L-prolyl-[collagen] + 2-oxoglutarate + O2 = trans-3-hydroxy-L-prolyl-[collagen] + succinate + CO2</text>
        <dbReference type="Rhea" id="RHEA:22872"/>
        <dbReference type="Rhea" id="RHEA-COMP:11676"/>
        <dbReference type="Rhea" id="RHEA-COMP:11678"/>
        <dbReference type="ChEBI" id="CHEBI:15379"/>
        <dbReference type="ChEBI" id="CHEBI:16526"/>
        <dbReference type="ChEBI" id="CHEBI:16810"/>
        <dbReference type="ChEBI" id="CHEBI:30031"/>
        <dbReference type="ChEBI" id="CHEBI:50342"/>
        <dbReference type="ChEBI" id="CHEBI:85428"/>
        <dbReference type="EC" id="1.14.11.7"/>
    </reaction>
</comment>
<comment type="cofactor">
    <cofactor evidence="1">
        <name>Fe cation</name>
        <dbReference type="ChEBI" id="CHEBI:24875"/>
    </cofactor>
</comment>
<comment type="cofactor">
    <cofactor evidence="1">
        <name>L-ascorbate</name>
        <dbReference type="ChEBI" id="CHEBI:38290"/>
    </cofactor>
</comment>
<comment type="interaction">
    <interactant intactId="EBI-396328">
        <id>Q32P28</id>
    </interactant>
    <interactant intactId="EBI-2515576">
        <id>O75718</id>
        <label>CRTAP</label>
    </interactant>
    <organismsDiffer>false</organismsDiffer>
    <experiments>3</experiments>
</comment>
<comment type="subcellular location">
    <molecule>Isoform 1</molecule>
    <subcellularLocation>
        <location evidence="9">Endoplasmic reticulum</location>
    </subcellularLocation>
</comment>
<comment type="subcellular location">
    <subcellularLocation>
        <location evidence="2">Secreted</location>
        <location evidence="2">Extracellular space</location>
        <location evidence="2">Extracellular matrix</location>
    </subcellularLocation>
    <text evidence="2">Secreted into the extracellular matrix as a chondroitin sulfate proteoglycan (CSPG).</text>
</comment>
<comment type="alternative products">
    <event type="alternative splicing"/>
    <isoform>
        <id>Q32P28-1</id>
        <name>1</name>
        <name>GROS1-L</name>
        <name>LEPREa</name>
        <name>P3H1a</name>
        <sequence type="displayed"/>
    </isoform>
    <isoform>
        <id>Q32P28-2</id>
        <name>2</name>
        <name>GROS1-S</name>
        <sequence type="described" ref="VSP_019346 VSP_019347"/>
    </isoform>
    <isoform>
        <id>Q32P28-3</id>
        <name>3</name>
        <name>LEPREc</name>
        <sequence type="described" ref="VSP_019348"/>
    </isoform>
    <isoform>
        <id>Q32P28-4</id>
        <name>4</name>
        <name>LEPREb</name>
        <name>P3H1b</name>
        <sequence type="described" ref="VSP_054864"/>
    </isoform>
</comment>
<comment type="PTM">
    <text evidence="2">O-glycosylated; chondroitin sulfate.</text>
</comment>
<comment type="disease" evidence="8 9">
    <disease id="DI-02105">
        <name>Osteogenesis imperfecta 8</name>
        <acronym>OI8</acronym>
        <description>A form of osteogenesis imperfecta, a disorder of bone formation characterized by low bone mass, bone fragility and susceptibility to fractures after minimal trauma. Disease severity ranges from very mild forms without fractures to intrauterine fractures and perinatal lethality. Extraskeletal manifestations, which affect a variable number of patients, are dentinogenesis imperfecta, hearing loss, and blue sclerae. OI8 is characterized by disproportionate short stature, shortening of the long bones, white sclerae, a round face and a short barrel-shaped chest.</description>
        <dbReference type="MIM" id="610915"/>
    </disease>
    <text evidence="9">The disease is caused by variants affecting the gene represented in this entry. A splice site mutation leading to the absence of isoform 1 has been reported in 2 OI8 patients. Isoform 1 is the only form predicted to be located in the endoplasmic reticulum, which the appropriate location for the catalysis of collagen hydroxylation. These patients show indeed severely reduced COL1A1 hydroxylation (PubMed:19088120).</text>
</comment>
<comment type="similarity">
    <text evidence="14">Belongs to the leprecan family.</text>
</comment>
<comment type="sequence caution" evidence="14">
    <conflict type="erroneous initiation">
        <sequence resource="EMBL-CDS" id="BAB15256"/>
    </conflict>
    <text>Truncated N-terminus.</text>
</comment>
<comment type="online information" name="Osteogenesis imperfecta variant database">
    <link uri="https://www.LOVD.nl/P3H1"/>
    <text>The P3H1 gene homepage</text>
</comment>
<organism>
    <name type="scientific">Homo sapiens</name>
    <name type="common">Human</name>
    <dbReference type="NCBI Taxonomy" id="9606"/>
    <lineage>
        <taxon>Eukaryota</taxon>
        <taxon>Metazoa</taxon>
        <taxon>Chordata</taxon>
        <taxon>Craniata</taxon>
        <taxon>Vertebrata</taxon>
        <taxon>Euteleostomi</taxon>
        <taxon>Mammalia</taxon>
        <taxon>Eutheria</taxon>
        <taxon>Euarchontoglires</taxon>
        <taxon>Primates</taxon>
        <taxon>Haplorrhini</taxon>
        <taxon>Catarrhini</taxon>
        <taxon>Hominidae</taxon>
        <taxon>Homo</taxon>
    </lineage>
</organism>
<evidence type="ECO:0000250" key="1"/>
<evidence type="ECO:0000250" key="2">
    <source>
        <dbReference type="UniProtKB" id="Q9R1J8"/>
    </source>
</evidence>
<evidence type="ECO:0000255" key="3"/>
<evidence type="ECO:0000255" key="4">
    <source>
        <dbReference type="PROSITE-ProRule" id="PRU00805"/>
    </source>
</evidence>
<evidence type="ECO:0000255" key="5">
    <source>
        <dbReference type="PROSITE-ProRule" id="PRU10138"/>
    </source>
</evidence>
<evidence type="ECO:0000256" key="6">
    <source>
        <dbReference type="SAM" id="MobiDB-lite"/>
    </source>
</evidence>
<evidence type="ECO:0000269" key="7">
    <source>
    </source>
</evidence>
<evidence type="ECO:0000269" key="8">
    <source>
    </source>
</evidence>
<evidence type="ECO:0000269" key="9">
    <source>
    </source>
</evidence>
<evidence type="ECO:0000269" key="10">
    <source>
    </source>
</evidence>
<evidence type="ECO:0000303" key="11">
    <source>
    </source>
</evidence>
<evidence type="ECO:0000303" key="12">
    <source>
    </source>
</evidence>
<evidence type="ECO:0000303" key="13">
    <source>
    </source>
</evidence>
<evidence type="ECO:0000305" key="14"/>
<evidence type="ECO:0000312" key="15">
    <source>
        <dbReference type="HGNC" id="HGNC:19316"/>
    </source>
</evidence>
<evidence type="ECO:0007829" key="16">
    <source>
        <dbReference type="PDB" id="8K0F"/>
    </source>
</evidence>
<evidence type="ECO:0007829" key="17">
    <source>
        <dbReference type="PDB" id="8K0M"/>
    </source>
</evidence>
<evidence type="ECO:0007829" key="18">
    <source>
        <dbReference type="PDB" id="8K17"/>
    </source>
</evidence>
<sequence length="736" mass="83394">MAVRALKLLTTLLAVVAAASQAEVESEAGWGMVTPDLLFAEGTAAYARGDWPGVVLSMERALRSRAALRALRLRCRTQCAADFPWELDPDWSPSPAQASGAAALRDLSFFGGLLRRAACLRRCLGPPAAHSLSEEMELEFRKRSPYNYLQVAYFKINKLEKAVAAAHTFFVGNPEHMEMQQNLDYYQTMSGVKEADFKDLETQPHMQEFRLGVRLYSEEQPQEAVPHLEAALQEYFVAYEECRALCEGPYDYDGYNYLEYNADLFQAITDHYIQVLNCKQNCVTELASHPSREKPFEDFLPSHYNYLQFAYYNIGNYTQAVECAKTYLLFFPNDEVMNQNLAYYAAMLGEEHTRSIGPRESAKEYRQRSLLEKELLFFAYDVFGIPFVDPDSWTPEEVIPKRLQEKQKSERETAVRISQEIGNLMKEIETLVEEKTKESLDVSRLTREGGPLLYEGISLTMNSKLLNGSQRVVMDGVISDHECQELQRLTNVAATSGDGYRGQTSPHTPNEKFYGVTVFKALKLGQEGKVPLQSAHLYYNVTEKVRRIMESYFRLDTPLYFSYSHLVCRTAIEEVQAERKDDSHPVHVDNCILNAETLVCVKEPPAYTFRDYSAILYLNGDFDGGNFYFTELDAKTVTAEVQPQCGRAVGFSSGTENPHGVKAVTRGQRCAIALWFTLDPRHSERDRVQADDLVKMLFSPEEMDLSQEQPLDAQQGPPEPAQESLSGSESKPKDEL</sequence>
<protein>
    <recommendedName>
        <fullName evidence="15">Prolyl 3-hydroxylase 1</fullName>
        <ecNumber>1.14.11.7</ecNumber>
    </recommendedName>
    <alternativeName>
        <fullName evidence="11">Growth suppressor 1</fullName>
    </alternativeName>
    <alternativeName>
        <fullName evidence="2">Leucine- and proline-enriched proteoglycan 1</fullName>
        <shortName evidence="2">Leprecan-1</shortName>
    </alternativeName>
</protein>